<accession>Q329B1</accession>
<proteinExistence type="inferred from homology"/>
<protein>
    <recommendedName>
        <fullName evidence="1">tRNA modification GTPase MnmE</fullName>
        <ecNumber evidence="1">3.6.-.-</ecNumber>
    </recommendedName>
</protein>
<sequence>MSDNDTIVAQATPPGRGGVGILRISGFKAREVAETVLGKLPKPRYADYLPFKDADGSVLDQGIALWFPGPNSFTGEDVLELQGHGGPVILDLLLKRILTIPGLRIARPGEFSERAFLNDKLDLAQAEAIADLIDASSEQAARSALNSLQGAFSARVNHLVEALTHLRIYVEAAIDFPDEEIDFLSDGKIEAQLNDVIADLDAVRAEARQGSLLREGMKVVIAGRPNAGKSSLLNALAGREAAIVTDIAGTTRDVLREHIHIDGMPLHIIDTAGLREASDEVERIGIERAWQEIEQADRVLFMVDGTTTDAVDPAEIWPEFIARLPAKLPITVVRNKADITGETLGISEVNGHALIRLSARTGEGVDVLRNHLKQSMGFDTNMEGGFLARRRHLQALEQAAEHLQQGKAQLLGAWAGELLAEELRLAQQNLSEITGEFTSDDLLGRIFSSFCIGK</sequence>
<feature type="chain" id="PRO_1000048877" description="tRNA modification GTPase MnmE">
    <location>
        <begin position="1"/>
        <end position="454"/>
    </location>
</feature>
<feature type="domain" description="TrmE-type G">
    <location>
        <begin position="216"/>
        <end position="377"/>
    </location>
</feature>
<feature type="binding site" evidence="1">
    <location>
        <position position="23"/>
    </location>
    <ligand>
        <name>(6S)-5-formyl-5,6,7,8-tetrahydrofolate</name>
        <dbReference type="ChEBI" id="CHEBI:57457"/>
    </ligand>
</feature>
<feature type="binding site" evidence="1">
    <location>
        <position position="80"/>
    </location>
    <ligand>
        <name>(6S)-5-formyl-5,6,7,8-tetrahydrofolate</name>
        <dbReference type="ChEBI" id="CHEBI:57457"/>
    </ligand>
</feature>
<feature type="binding site" evidence="1">
    <location>
        <position position="120"/>
    </location>
    <ligand>
        <name>(6S)-5-formyl-5,6,7,8-tetrahydrofolate</name>
        <dbReference type="ChEBI" id="CHEBI:57457"/>
    </ligand>
</feature>
<feature type="binding site" evidence="1">
    <location>
        <begin position="226"/>
        <end position="231"/>
    </location>
    <ligand>
        <name>GTP</name>
        <dbReference type="ChEBI" id="CHEBI:37565"/>
    </ligand>
</feature>
<feature type="binding site" evidence="1">
    <location>
        <position position="226"/>
    </location>
    <ligand>
        <name>K(+)</name>
        <dbReference type="ChEBI" id="CHEBI:29103"/>
    </ligand>
</feature>
<feature type="binding site" evidence="1">
    <location>
        <position position="230"/>
    </location>
    <ligand>
        <name>Mg(2+)</name>
        <dbReference type="ChEBI" id="CHEBI:18420"/>
    </ligand>
</feature>
<feature type="binding site" evidence="1">
    <location>
        <begin position="245"/>
        <end position="251"/>
    </location>
    <ligand>
        <name>GTP</name>
        <dbReference type="ChEBI" id="CHEBI:37565"/>
    </ligand>
</feature>
<feature type="binding site" evidence="1">
    <location>
        <position position="245"/>
    </location>
    <ligand>
        <name>K(+)</name>
        <dbReference type="ChEBI" id="CHEBI:29103"/>
    </ligand>
</feature>
<feature type="binding site" evidence="1">
    <location>
        <position position="247"/>
    </location>
    <ligand>
        <name>K(+)</name>
        <dbReference type="ChEBI" id="CHEBI:29103"/>
    </ligand>
</feature>
<feature type="binding site" evidence="1">
    <location>
        <position position="250"/>
    </location>
    <ligand>
        <name>K(+)</name>
        <dbReference type="ChEBI" id="CHEBI:29103"/>
    </ligand>
</feature>
<feature type="binding site" evidence="1">
    <location>
        <position position="251"/>
    </location>
    <ligand>
        <name>Mg(2+)</name>
        <dbReference type="ChEBI" id="CHEBI:18420"/>
    </ligand>
</feature>
<feature type="binding site" evidence="1">
    <location>
        <begin position="270"/>
        <end position="273"/>
    </location>
    <ligand>
        <name>GTP</name>
        <dbReference type="ChEBI" id="CHEBI:37565"/>
    </ligand>
</feature>
<feature type="binding site" evidence="1">
    <location>
        <begin position="335"/>
        <end position="338"/>
    </location>
    <ligand>
        <name>GTP</name>
        <dbReference type="ChEBI" id="CHEBI:37565"/>
    </ligand>
</feature>
<feature type="binding site" evidence="1">
    <location>
        <begin position="358"/>
        <end position="360"/>
    </location>
    <ligand>
        <name>GTP</name>
        <dbReference type="ChEBI" id="CHEBI:37565"/>
    </ligand>
</feature>
<feature type="binding site" evidence="1">
    <location>
        <position position="454"/>
    </location>
    <ligand>
        <name>(6S)-5-formyl-5,6,7,8-tetrahydrofolate</name>
        <dbReference type="ChEBI" id="CHEBI:57457"/>
    </ligand>
</feature>
<gene>
    <name evidence="1" type="primary">mnmE</name>
    <name evidence="1" type="synonym">trmE</name>
    <name type="ordered locus">SDY_4189</name>
</gene>
<reference key="1">
    <citation type="journal article" date="2005" name="Nucleic Acids Res.">
        <title>Genome dynamics and diversity of Shigella species, the etiologic agents of bacillary dysentery.</title>
        <authorList>
            <person name="Yang F."/>
            <person name="Yang J."/>
            <person name="Zhang X."/>
            <person name="Chen L."/>
            <person name="Jiang Y."/>
            <person name="Yan Y."/>
            <person name="Tang X."/>
            <person name="Wang J."/>
            <person name="Xiong Z."/>
            <person name="Dong J."/>
            <person name="Xue Y."/>
            <person name="Zhu Y."/>
            <person name="Xu X."/>
            <person name="Sun L."/>
            <person name="Chen S."/>
            <person name="Nie H."/>
            <person name="Peng J."/>
            <person name="Xu J."/>
            <person name="Wang Y."/>
            <person name="Yuan Z."/>
            <person name="Wen Y."/>
            <person name="Yao Z."/>
            <person name="Shen Y."/>
            <person name="Qiang B."/>
            <person name="Hou Y."/>
            <person name="Yu J."/>
            <person name="Jin Q."/>
        </authorList>
    </citation>
    <scope>NUCLEOTIDE SEQUENCE [LARGE SCALE GENOMIC DNA]</scope>
    <source>
        <strain>Sd197</strain>
    </source>
</reference>
<evidence type="ECO:0000255" key="1">
    <source>
        <dbReference type="HAMAP-Rule" id="MF_00379"/>
    </source>
</evidence>
<organism>
    <name type="scientific">Shigella dysenteriae serotype 1 (strain Sd197)</name>
    <dbReference type="NCBI Taxonomy" id="300267"/>
    <lineage>
        <taxon>Bacteria</taxon>
        <taxon>Pseudomonadati</taxon>
        <taxon>Pseudomonadota</taxon>
        <taxon>Gammaproteobacteria</taxon>
        <taxon>Enterobacterales</taxon>
        <taxon>Enterobacteriaceae</taxon>
        <taxon>Shigella</taxon>
    </lineage>
</organism>
<name>MNME_SHIDS</name>
<keyword id="KW-0963">Cytoplasm</keyword>
<keyword id="KW-0342">GTP-binding</keyword>
<keyword id="KW-0378">Hydrolase</keyword>
<keyword id="KW-0460">Magnesium</keyword>
<keyword id="KW-0479">Metal-binding</keyword>
<keyword id="KW-0547">Nucleotide-binding</keyword>
<keyword id="KW-0630">Potassium</keyword>
<keyword id="KW-1185">Reference proteome</keyword>
<keyword id="KW-0819">tRNA processing</keyword>
<dbReference type="EC" id="3.6.-.-" evidence="1"/>
<dbReference type="EMBL" id="CP000034">
    <property type="protein sequence ID" value="ABB64094.1"/>
    <property type="molecule type" value="Genomic_DNA"/>
</dbReference>
<dbReference type="RefSeq" id="WP_001282344.1">
    <property type="nucleotide sequence ID" value="NC_007606.1"/>
</dbReference>
<dbReference type="RefSeq" id="YP_405585.1">
    <property type="nucleotide sequence ID" value="NC_007606.1"/>
</dbReference>
<dbReference type="SMR" id="Q329B1"/>
<dbReference type="STRING" id="300267.SDY_4189"/>
<dbReference type="EnsemblBacteria" id="ABB64094">
    <property type="protein sequence ID" value="ABB64094"/>
    <property type="gene ID" value="SDY_4189"/>
</dbReference>
<dbReference type="GeneID" id="75173923"/>
<dbReference type="KEGG" id="sdy:SDY_4189"/>
<dbReference type="PATRIC" id="fig|300267.13.peg.4926"/>
<dbReference type="HOGENOM" id="CLU_019624_4_1_6"/>
<dbReference type="Proteomes" id="UP000002716">
    <property type="component" value="Chromosome"/>
</dbReference>
<dbReference type="GO" id="GO:0005829">
    <property type="term" value="C:cytosol"/>
    <property type="evidence" value="ECO:0007669"/>
    <property type="project" value="TreeGrafter"/>
</dbReference>
<dbReference type="GO" id="GO:0005525">
    <property type="term" value="F:GTP binding"/>
    <property type="evidence" value="ECO:0007669"/>
    <property type="project" value="UniProtKB-UniRule"/>
</dbReference>
<dbReference type="GO" id="GO:0003924">
    <property type="term" value="F:GTPase activity"/>
    <property type="evidence" value="ECO:0007669"/>
    <property type="project" value="UniProtKB-UniRule"/>
</dbReference>
<dbReference type="GO" id="GO:0046872">
    <property type="term" value="F:metal ion binding"/>
    <property type="evidence" value="ECO:0007669"/>
    <property type="project" value="UniProtKB-KW"/>
</dbReference>
<dbReference type="GO" id="GO:0030488">
    <property type="term" value="P:tRNA methylation"/>
    <property type="evidence" value="ECO:0007669"/>
    <property type="project" value="TreeGrafter"/>
</dbReference>
<dbReference type="GO" id="GO:0002098">
    <property type="term" value="P:tRNA wobble uridine modification"/>
    <property type="evidence" value="ECO:0007669"/>
    <property type="project" value="TreeGrafter"/>
</dbReference>
<dbReference type="CDD" id="cd04164">
    <property type="entry name" value="trmE"/>
    <property type="match status" value="1"/>
</dbReference>
<dbReference type="CDD" id="cd14858">
    <property type="entry name" value="TrmE_N"/>
    <property type="match status" value="1"/>
</dbReference>
<dbReference type="FunFam" id="3.30.1360.120:FF:000001">
    <property type="entry name" value="tRNA modification GTPase MnmE"/>
    <property type="match status" value="1"/>
</dbReference>
<dbReference type="FunFam" id="3.40.50.300:FF:000249">
    <property type="entry name" value="tRNA modification GTPase MnmE"/>
    <property type="match status" value="1"/>
</dbReference>
<dbReference type="Gene3D" id="3.40.50.300">
    <property type="entry name" value="P-loop containing nucleotide triphosphate hydrolases"/>
    <property type="match status" value="1"/>
</dbReference>
<dbReference type="Gene3D" id="3.30.1360.120">
    <property type="entry name" value="Probable tRNA modification gtpase trme, domain 1"/>
    <property type="match status" value="1"/>
</dbReference>
<dbReference type="Gene3D" id="1.20.120.430">
    <property type="entry name" value="tRNA modification GTPase MnmE domain 2"/>
    <property type="match status" value="1"/>
</dbReference>
<dbReference type="HAMAP" id="MF_00379">
    <property type="entry name" value="GTPase_MnmE"/>
    <property type="match status" value="1"/>
</dbReference>
<dbReference type="InterPro" id="IPR031168">
    <property type="entry name" value="G_TrmE"/>
</dbReference>
<dbReference type="InterPro" id="IPR006073">
    <property type="entry name" value="GTP-bd"/>
</dbReference>
<dbReference type="InterPro" id="IPR018948">
    <property type="entry name" value="GTP-bd_TrmE_N"/>
</dbReference>
<dbReference type="InterPro" id="IPR004520">
    <property type="entry name" value="GTPase_MnmE"/>
</dbReference>
<dbReference type="InterPro" id="IPR027368">
    <property type="entry name" value="MnmE_dom2"/>
</dbReference>
<dbReference type="InterPro" id="IPR025867">
    <property type="entry name" value="MnmE_helical"/>
</dbReference>
<dbReference type="InterPro" id="IPR027417">
    <property type="entry name" value="P-loop_NTPase"/>
</dbReference>
<dbReference type="InterPro" id="IPR005225">
    <property type="entry name" value="Small_GTP-bd"/>
</dbReference>
<dbReference type="InterPro" id="IPR027266">
    <property type="entry name" value="TrmE/GcvT_dom1"/>
</dbReference>
<dbReference type="NCBIfam" id="TIGR00450">
    <property type="entry name" value="mnmE_trmE_thdF"/>
    <property type="match status" value="1"/>
</dbReference>
<dbReference type="NCBIfam" id="NF003661">
    <property type="entry name" value="PRK05291.1-3"/>
    <property type="match status" value="1"/>
</dbReference>
<dbReference type="NCBIfam" id="TIGR00231">
    <property type="entry name" value="small_GTP"/>
    <property type="match status" value="1"/>
</dbReference>
<dbReference type="PANTHER" id="PTHR42714">
    <property type="entry name" value="TRNA MODIFICATION GTPASE GTPBP3"/>
    <property type="match status" value="1"/>
</dbReference>
<dbReference type="PANTHER" id="PTHR42714:SF2">
    <property type="entry name" value="TRNA MODIFICATION GTPASE GTPBP3, MITOCHONDRIAL"/>
    <property type="match status" value="1"/>
</dbReference>
<dbReference type="Pfam" id="PF01926">
    <property type="entry name" value="MMR_HSR1"/>
    <property type="match status" value="1"/>
</dbReference>
<dbReference type="Pfam" id="PF12631">
    <property type="entry name" value="MnmE_helical"/>
    <property type="match status" value="1"/>
</dbReference>
<dbReference type="Pfam" id="PF10396">
    <property type="entry name" value="TrmE_N"/>
    <property type="match status" value="1"/>
</dbReference>
<dbReference type="SUPFAM" id="SSF52540">
    <property type="entry name" value="P-loop containing nucleoside triphosphate hydrolases"/>
    <property type="match status" value="1"/>
</dbReference>
<dbReference type="SUPFAM" id="SSF116878">
    <property type="entry name" value="TrmE connector domain"/>
    <property type="match status" value="1"/>
</dbReference>
<dbReference type="PROSITE" id="PS51709">
    <property type="entry name" value="G_TRME"/>
    <property type="match status" value="1"/>
</dbReference>
<comment type="function">
    <text evidence="1">Exhibits a very high intrinsic GTPase hydrolysis rate. Involved in the addition of a carboxymethylaminomethyl (cmnm) group at the wobble position (U34) of certain tRNAs, forming tRNA-cmnm(5)s(2)U34.</text>
</comment>
<comment type="cofactor">
    <cofactor evidence="1">
        <name>K(+)</name>
        <dbReference type="ChEBI" id="CHEBI:29103"/>
    </cofactor>
    <text evidence="1">Binds 1 potassium ion per subunit.</text>
</comment>
<comment type="subunit">
    <text evidence="1">Homodimer. Heterotetramer of two MnmE and two MnmG subunits.</text>
</comment>
<comment type="subcellular location">
    <subcellularLocation>
        <location evidence="1">Cytoplasm</location>
    </subcellularLocation>
</comment>
<comment type="similarity">
    <text evidence="1">Belongs to the TRAFAC class TrmE-Era-EngA-EngB-Septin-like GTPase superfamily. TrmE GTPase family.</text>
</comment>